<dbReference type="EC" id="3.1.30.1" evidence="8"/>
<dbReference type="EMBL" id="AL022603">
    <property type="status" value="NOT_ANNOTATED_CDS"/>
    <property type="molecule type" value="Genomic_DNA"/>
</dbReference>
<dbReference type="EMBL" id="CP002687">
    <property type="protein sequence ID" value="AEE84476.1"/>
    <property type="molecule type" value="Genomic_DNA"/>
</dbReference>
<dbReference type="EMBL" id="CP002687">
    <property type="protein sequence ID" value="ANM66198.1"/>
    <property type="molecule type" value="Genomic_DNA"/>
</dbReference>
<dbReference type="RefSeq" id="NP_001328107.1">
    <property type="nucleotide sequence ID" value="NM_001341503.1"/>
</dbReference>
<dbReference type="RefSeq" id="NP_680734.1">
    <property type="nucleotide sequence ID" value="NM_148368.2"/>
</dbReference>
<dbReference type="SMR" id="F4JJL0"/>
<dbReference type="FunCoup" id="F4JJL0">
    <property type="interactions" value="285"/>
</dbReference>
<dbReference type="STRING" id="3702.F4JJL0"/>
<dbReference type="GlyCosmos" id="F4JJL0">
    <property type="glycosylation" value="5 sites, No reported glycans"/>
</dbReference>
<dbReference type="GlyGen" id="F4JJL0">
    <property type="glycosylation" value="6 sites"/>
</dbReference>
<dbReference type="PaxDb" id="3702-AT4G21585.1"/>
<dbReference type="ProteomicsDB" id="222716"/>
<dbReference type="EnsemblPlants" id="AT4G21585.1">
    <property type="protein sequence ID" value="AT4G21585.1"/>
    <property type="gene ID" value="AT4G21585"/>
</dbReference>
<dbReference type="EnsemblPlants" id="AT4G21585.4">
    <property type="protein sequence ID" value="AT4G21585.4"/>
    <property type="gene ID" value="AT4G21585"/>
</dbReference>
<dbReference type="GeneID" id="828244"/>
<dbReference type="Gramene" id="AT4G21585.1">
    <property type="protein sequence ID" value="AT4G21585.1"/>
    <property type="gene ID" value="AT4G21585"/>
</dbReference>
<dbReference type="Gramene" id="AT4G21585.4">
    <property type="protein sequence ID" value="AT4G21585.4"/>
    <property type="gene ID" value="AT4G21585"/>
</dbReference>
<dbReference type="KEGG" id="ath:AT4G21585"/>
<dbReference type="Araport" id="AT4G21585"/>
<dbReference type="TAIR" id="AT4G21585">
    <property type="gene designation" value="ENDO4"/>
</dbReference>
<dbReference type="eggNOG" id="ENOG502QRXU">
    <property type="taxonomic scope" value="Eukaryota"/>
</dbReference>
<dbReference type="HOGENOM" id="CLU_044365_3_0_1"/>
<dbReference type="InParanoid" id="F4JJL0"/>
<dbReference type="OMA" id="WDTSIPN"/>
<dbReference type="PhylomeDB" id="F4JJL0"/>
<dbReference type="BRENDA" id="3.1.30.2">
    <property type="organism ID" value="399"/>
</dbReference>
<dbReference type="PRO" id="PR:F4JJL0"/>
<dbReference type="Proteomes" id="UP000006548">
    <property type="component" value="Chromosome 4"/>
</dbReference>
<dbReference type="ExpressionAtlas" id="F4JJL0">
    <property type="expression patterns" value="baseline and differential"/>
</dbReference>
<dbReference type="GO" id="GO:0004519">
    <property type="term" value="F:endonuclease activity"/>
    <property type="evidence" value="ECO:0000314"/>
    <property type="project" value="UniProtKB"/>
</dbReference>
<dbReference type="GO" id="GO:0046872">
    <property type="term" value="F:metal ion binding"/>
    <property type="evidence" value="ECO:0007669"/>
    <property type="project" value="UniProtKB-KW"/>
</dbReference>
<dbReference type="GO" id="GO:0003676">
    <property type="term" value="F:nucleic acid binding"/>
    <property type="evidence" value="ECO:0007669"/>
    <property type="project" value="InterPro"/>
</dbReference>
<dbReference type="GO" id="GO:0004521">
    <property type="term" value="F:RNA endonuclease activity"/>
    <property type="evidence" value="ECO:0000314"/>
    <property type="project" value="UniProtKB"/>
</dbReference>
<dbReference type="GO" id="GO:0000014">
    <property type="term" value="F:single-stranded DNA endodeoxyribonuclease activity"/>
    <property type="evidence" value="ECO:0000314"/>
    <property type="project" value="UniProtKB"/>
</dbReference>
<dbReference type="GO" id="GO:0006308">
    <property type="term" value="P:DNA catabolic process"/>
    <property type="evidence" value="ECO:0000314"/>
    <property type="project" value="UniProtKB"/>
</dbReference>
<dbReference type="CDD" id="cd11010">
    <property type="entry name" value="S1-P1_nuclease"/>
    <property type="match status" value="1"/>
</dbReference>
<dbReference type="FunFam" id="1.10.575.10:FF:000002">
    <property type="entry name" value="Endonuclease 2"/>
    <property type="match status" value="1"/>
</dbReference>
<dbReference type="Gene3D" id="1.10.575.10">
    <property type="entry name" value="P1 Nuclease"/>
    <property type="match status" value="1"/>
</dbReference>
<dbReference type="InterPro" id="IPR008947">
    <property type="entry name" value="PLipase_C/P1_nuclease_dom_sf"/>
</dbReference>
<dbReference type="InterPro" id="IPR003154">
    <property type="entry name" value="S1/P1nuclease"/>
</dbReference>
<dbReference type="PANTHER" id="PTHR33146">
    <property type="entry name" value="ENDONUCLEASE 4"/>
    <property type="match status" value="1"/>
</dbReference>
<dbReference type="PANTHER" id="PTHR33146:SF26">
    <property type="entry name" value="ENDONUCLEASE 4"/>
    <property type="match status" value="1"/>
</dbReference>
<dbReference type="Pfam" id="PF02265">
    <property type="entry name" value="S1-P1_nuclease"/>
    <property type="match status" value="1"/>
</dbReference>
<dbReference type="SUPFAM" id="SSF48537">
    <property type="entry name" value="Phospholipase C/P1 nuclease"/>
    <property type="match status" value="1"/>
</dbReference>
<organism>
    <name type="scientific">Arabidopsis thaliana</name>
    <name type="common">Mouse-ear cress</name>
    <dbReference type="NCBI Taxonomy" id="3702"/>
    <lineage>
        <taxon>Eukaryota</taxon>
        <taxon>Viridiplantae</taxon>
        <taxon>Streptophyta</taxon>
        <taxon>Embryophyta</taxon>
        <taxon>Tracheophyta</taxon>
        <taxon>Spermatophyta</taxon>
        <taxon>Magnoliopsida</taxon>
        <taxon>eudicotyledons</taxon>
        <taxon>Gunneridae</taxon>
        <taxon>Pentapetalae</taxon>
        <taxon>rosids</taxon>
        <taxon>malvids</taxon>
        <taxon>Brassicales</taxon>
        <taxon>Brassicaceae</taxon>
        <taxon>Camelineae</taxon>
        <taxon>Arabidopsis</taxon>
    </lineage>
</organism>
<reference key="1">
    <citation type="journal article" date="1999" name="Nature">
        <title>Sequence and analysis of chromosome 4 of the plant Arabidopsis thaliana.</title>
        <authorList>
            <person name="Mayer K.F.X."/>
            <person name="Schueller C."/>
            <person name="Wambutt R."/>
            <person name="Murphy G."/>
            <person name="Volckaert G."/>
            <person name="Pohl T."/>
            <person name="Duesterhoeft A."/>
            <person name="Stiekema W."/>
            <person name="Entian K.-D."/>
            <person name="Terryn N."/>
            <person name="Harris B."/>
            <person name="Ansorge W."/>
            <person name="Brandt P."/>
            <person name="Grivell L.A."/>
            <person name="Rieger M."/>
            <person name="Weichselgartner M."/>
            <person name="de Simone V."/>
            <person name="Obermaier B."/>
            <person name="Mache R."/>
            <person name="Mueller M."/>
            <person name="Kreis M."/>
            <person name="Delseny M."/>
            <person name="Puigdomenech P."/>
            <person name="Watson M."/>
            <person name="Schmidtheini T."/>
            <person name="Reichert B."/>
            <person name="Portetelle D."/>
            <person name="Perez-Alonso M."/>
            <person name="Boutry M."/>
            <person name="Bancroft I."/>
            <person name="Vos P."/>
            <person name="Hoheisel J."/>
            <person name="Zimmermann W."/>
            <person name="Wedler H."/>
            <person name="Ridley P."/>
            <person name="Langham S.-A."/>
            <person name="McCullagh B."/>
            <person name="Bilham L."/>
            <person name="Robben J."/>
            <person name="van der Schueren J."/>
            <person name="Grymonprez B."/>
            <person name="Chuang Y.-J."/>
            <person name="Vandenbussche F."/>
            <person name="Braeken M."/>
            <person name="Weltjens I."/>
            <person name="Voet M."/>
            <person name="Bastiaens I."/>
            <person name="Aert R."/>
            <person name="Defoor E."/>
            <person name="Weitzenegger T."/>
            <person name="Bothe G."/>
            <person name="Ramsperger U."/>
            <person name="Hilbert H."/>
            <person name="Braun M."/>
            <person name="Holzer E."/>
            <person name="Brandt A."/>
            <person name="Peters S."/>
            <person name="van Staveren M."/>
            <person name="Dirkse W."/>
            <person name="Mooijman P."/>
            <person name="Klein Lankhorst R."/>
            <person name="Rose M."/>
            <person name="Hauf J."/>
            <person name="Koetter P."/>
            <person name="Berneiser S."/>
            <person name="Hempel S."/>
            <person name="Feldpausch M."/>
            <person name="Lamberth S."/>
            <person name="Van den Daele H."/>
            <person name="De Keyser A."/>
            <person name="Buysshaert C."/>
            <person name="Gielen J."/>
            <person name="Villarroel R."/>
            <person name="De Clercq R."/>
            <person name="van Montagu M."/>
            <person name="Rogers J."/>
            <person name="Cronin A."/>
            <person name="Quail M.A."/>
            <person name="Bray-Allen S."/>
            <person name="Clark L."/>
            <person name="Doggett J."/>
            <person name="Hall S."/>
            <person name="Kay M."/>
            <person name="Lennard N."/>
            <person name="McLay K."/>
            <person name="Mayes R."/>
            <person name="Pettett A."/>
            <person name="Rajandream M.A."/>
            <person name="Lyne M."/>
            <person name="Benes V."/>
            <person name="Rechmann S."/>
            <person name="Borkova D."/>
            <person name="Bloecker H."/>
            <person name="Scharfe M."/>
            <person name="Grimm M."/>
            <person name="Loehnert T.-H."/>
            <person name="Dose S."/>
            <person name="de Haan M."/>
            <person name="Maarse A.C."/>
            <person name="Schaefer M."/>
            <person name="Mueller-Auer S."/>
            <person name="Gabel C."/>
            <person name="Fuchs M."/>
            <person name="Fartmann B."/>
            <person name="Granderath K."/>
            <person name="Dauner D."/>
            <person name="Herzl A."/>
            <person name="Neumann S."/>
            <person name="Argiriou A."/>
            <person name="Vitale D."/>
            <person name="Liguori R."/>
            <person name="Piravandi E."/>
            <person name="Massenet O."/>
            <person name="Quigley F."/>
            <person name="Clabauld G."/>
            <person name="Muendlein A."/>
            <person name="Felber R."/>
            <person name="Schnabl S."/>
            <person name="Hiller R."/>
            <person name="Schmidt W."/>
            <person name="Lecharny A."/>
            <person name="Aubourg S."/>
            <person name="Chefdor F."/>
            <person name="Cooke R."/>
            <person name="Berger C."/>
            <person name="Monfort A."/>
            <person name="Casacuberta E."/>
            <person name="Gibbons T."/>
            <person name="Weber N."/>
            <person name="Vandenbol M."/>
            <person name="Bargues M."/>
            <person name="Terol J."/>
            <person name="Torres A."/>
            <person name="Perez-Perez A."/>
            <person name="Purnelle B."/>
            <person name="Bent E."/>
            <person name="Johnson S."/>
            <person name="Tacon D."/>
            <person name="Jesse T."/>
            <person name="Heijnen L."/>
            <person name="Schwarz S."/>
            <person name="Scholler P."/>
            <person name="Heber S."/>
            <person name="Francs P."/>
            <person name="Bielke C."/>
            <person name="Frishman D."/>
            <person name="Haase D."/>
            <person name="Lemcke K."/>
            <person name="Mewes H.-W."/>
            <person name="Stocker S."/>
            <person name="Zaccaria P."/>
            <person name="Bevan M."/>
            <person name="Wilson R.K."/>
            <person name="de la Bastide M."/>
            <person name="Habermann K."/>
            <person name="Parnell L."/>
            <person name="Dedhia N."/>
            <person name="Gnoj L."/>
            <person name="Schutz K."/>
            <person name="Huang E."/>
            <person name="Spiegel L."/>
            <person name="Sekhon M."/>
            <person name="Murray J."/>
            <person name="Sheet P."/>
            <person name="Cordes M."/>
            <person name="Abu-Threideh J."/>
            <person name="Stoneking T."/>
            <person name="Kalicki J."/>
            <person name="Graves T."/>
            <person name="Harmon G."/>
            <person name="Edwards J."/>
            <person name="Latreille P."/>
            <person name="Courtney L."/>
            <person name="Cloud J."/>
            <person name="Abbott A."/>
            <person name="Scott K."/>
            <person name="Johnson D."/>
            <person name="Minx P."/>
            <person name="Bentley D."/>
            <person name="Fulton B."/>
            <person name="Miller N."/>
            <person name="Greco T."/>
            <person name="Kemp K."/>
            <person name="Kramer J."/>
            <person name="Fulton L."/>
            <person name="Mardis E."/>
            <person name="Dante M."/>
            <person name="Pepin K."/>
            <person name="Hillier L.W."/>
            <person name="Nelson J."/>
            <person name="Spieth J."/>
            <person name="Ryan E."/>
            <person name="Andrews S."/>
            <person name="Geisel C."/>
            <person name="Layman D."/>
            <person name="Du H."/>
            <person name="Ali J."/>
            <person name="Berghoff A."/>
            <person name="Jones K."/>
            <person name="Drone K."/>
            <person name="Cotton M."/>
            <person name="Joshu C."/>
            <person name="Antonoiu B."/>
            <person name="Zidanic M."/>
            <person name="Strong C."/>
            <person name="Sun H."/>
            <person name="Lamar B."/>
            <person name="Yordan C."/>
            <person name="Ma P."/>
            <person name="Zhong J."/>
            <person name="Preston R."/>
            <person name="Vil D."/>
            <person name="Shekher M."/>
            <person name="Matero A."/>
            <person name="Shah R."/>
            <person name="Swaby I.K."/>
            <person name="O'Shaughnessy A."/>
            <person name="Rodriguez M."/>
            <person name="Hoffman J."/>
            <person name="Till S."/>
            <person name="Granat S."/>
            <person name="Shohdy N."/>
            <person name="Hasegawa A."/>
            <person name="Hameed A."/>
            <person name="Lodhi M."/>
            <person name="Johnson A."/>
            <person name="Chen E."/>
            <person name="Marra M.A."/>
            <person name="Martienssen R."/>
            <person name="McCombie W.R."/>
        </authorList>
    </citation>
    <scope>NUCLEOTIDE SEQUENCE [LARGE SCALE GENOMIC DNA]</scope>
    <source>
        <strain>cv. Columbia</strain>
    </source>
</reference>
<reference key="2">
    <citation type="journal article" date="2017" name="Plant J.">
        <title>Araport11: a complete reannotation of the Arabidopsis thaliana reference genome.</title>
        <authorList>
            <person name="Cheng C.Y."/>
            <person name="Krishnakumar V."/>
            <person name="Chan A.P."/>
            <person name="Thibaud-Nissen F."/>
            <person name="Schobel S."/>
            <person name="Town C.D."/>
        </authorList>
    </citation>
    <scope>GENOME REANNOTATION</scope>
    <source>
        <strain>cv. Columbia</strain>
    </source>
</reference>
<reference key="3">
    <citation type="journal article" date="2007" name="Plant J.">
        <title>Characterization of Arabidopsis thaliana mismatch specific endonucleases: application to mutation discovery by TILLING in pea.</title>
        <authorList>
            <person name="Triques K."/>
            <person name="Sturbois B."/>
            <person name="Gallais S."/>
            <person name="Dalmais M."/>
            <person name="Chauvin S."/>
            <person name="Clepet C."/>
            <person name="Aubourg S."/>
            <person name="Rameau C."/>
            <person name="Caboche M."/>
            <person name="Bendahmane A."/>
        </authorList>
    </citation>
    <scope>FUNCTION</scope>
    <scope>GENE FAMILY</scope>
    <scope>NOMENCLATURE</scope>
</reference>
<reference key="4">
    <citation type="journal article" date="2013" name="Plant Cell Physiol.">
        <title>The plant s1-like nuclease family has evolved a highly diverse range of catalytic capabilities.</title>
        <authorList>
            <person name="Lesniewicz K."/>
            <person name="Karlowski W.M."/>
            <person name="Pienkowska J.R."/>
            <person name="Krzywkowski P."/>
            <person name="Poreba E."/>
        </authorList>
    </citation>
    <scope>FUNCTION</scope>
    <scope>MUTAGENESIS OF 284-ALA--SER-299</scope>
    <scope>BIOPHYSICOCHEMICAL PROPERTIES</scope>
    <scope>CATALYTIC ACTIVITY</scope>
    <scope>COFACTOR</scope>
    <scope>PROTEOLYTIC CLEAVAGE</scope>
    <scope>GENE FAMILY</scope>
</reference>
<evidence type="ECO:0000250" key="1"/>
<evidence type="ECO:0000250" key="2">
    <source>
        <dbReference type="UniProtKB" id="P24021"/>
    </source>
</evidence>
<evidence type="ECO:0000250" key="3">
    <source>
        <dbReference type="UniProtKB" id="P24289"/>
    </source>
</evidence>
<evidence type="ECO:0000250" key="4">
    <source>
        <dbReference type="UniProtKB" id="Q9C9G4"/>
    </source>
</evidence>
<evidence type="ECO:0000255" key="5"/>
<evidence type="ECO:0000255" key="6">
    <source>
        <dbReference type="PROSITE-ProRule" id="PRU00498"/>
    </source>
</evidence>
<evidence type="ECO:0000269" key="7">
    <source>
    </source>
</evidence>
<evidence type="ECO:0000269" key="8">
    <source>
    </source>
</evidence>
<evidence type="ECO:0000303" key="9">
    <source>
    </source>
</evidence>
<evidence type="ECO:0000305" key="10"/>
<evidence type="ECO:0000312" key="11">
    <source>
        <dbReference type="Araport" id="AT4G21585"/>
    </source>
</evidence>
<evidence type="ECO:0000312" key="12">
    <source>
        <dbReference type="EMBL" id="AL022603"/>
    </source>
</evidence>
<proteinExistence type="evidence at protein level"/>
<keyword id="KW-0106">Calcium</keyword>
<keyword id="KW-1015">Disulfide bond</keyword>
<keyword id="KW-0255">Endonuclease</keyword>
<keyword id="KW-0325">Glycoprotein</keyword>
<keyword id="KW-0378">Hydrolase</keyword>
<keyword id="KW-0464">Manganese</keyword>
<keyword id="KW-0479">Metal-binding</keyword>
<keyword id="KW-0540">Nuclease</keyword>
<keyword id="KW-1185">Reference proteome</keyword>
<keyword id="KW-0732">Signal</keyword>
<protein>
    <recommendedName>
        <fullName evidence="9">Endonuclease 4</fullName>
        <shortName evidence="9">AtENDO4</shortName>
        <ecNumber evidence="8">3.1.30.1</ecNumber>
    </recommendedName>
    <alternativeName>
        <fullName evidence="9">Deoxyribonuclease ENDO4</fullName>
    </alternativeName>
    <alternativeName>
        <fullName evidence="9">Single-stranded-nucleate endonuclease ENDO4</fullName>
    </alternativeName>
</protein>
<name>ENDO4_ARATH</name>
<comment type="function">
    <text evidence="7 8">Endonuclease that can use single-stranded RNA and DNA as substrates (PubMed:23620482). In contradiction with PubMed:23620482, cannot hydrolyze single-stranded DNA and does not cleave mismatches (PubMed:17651368).</text>
</comment>
<comment type="catalytic activity">
    <reaction evidence="8">
        <text>Endonucleolytic cleavage to 5'-phosphomononucleotide and 5'-phosphooligonucleotide end-products.</text>
        <dbReference type="EC" id="3.1.30.1"/>
    </reaction>
</comment>
<comment type="cofactor">
    <cofactor evidence="8">
        <name>Mn(2+)</name>
        <dbReference type="ChEBI" id="CHEBI:29035"/>
    </cofactor>
    <cofactor evidence="8">
        <name>Ca(2+)</name>
        <dbReference type="ChEBI" id="CHEBI:29108"/>
    </cofactor>
    <text evidence="8">Binds 3 divalent metal cations.</text>
</comment>
<comment type="biophysicochemical properties">
    <phDependence>
        <text evidence="8">Optimum pH is 8 with RNA and ssDNA as substrates.</text>
    </phDependence>
</comment>
<comment type="subunit">
    <text evidence="1">Monomer.</text>
</comment>
<comment type="similarity">
    <text evidence="10">Belongs to the nuclease type I family.</text>
</comment>
<gene>
    <name evidence="9" type="primary">ENDO4</name>
    <name evidence="11" type="ordered locus">At4g21585</name>
    <name evidence="12" type="ORF">F18E5</name>
</gene>
<accession>F4JJL0</accession>
<feature type="signal peptide" evidence="5">
    <location>
        <begin position="1"/>
        <end position="24"/>
    </location>
</feature>
<feature type="chain" id="PRO_0000417622" description="Endonuclease 4">
    <location>
        <begin position="25"/>
        <end position="283"/>
    </location>
</feature>
<feature type="propeptide" id="PRO_0000445543" description="Removed in mature form" evidence="8">
    <location>
        <begin position="284"/>
        <end position="299"/>
    </location>
</feature>
<feature type="region of interest" description="Substrate binding" evidence="4">
    <location>
        <begin position="147"/>
        <end position="196"/>
    </location>
</feature>
<feature type="binding site" evidence="4">
    <location>
        <begin position="25"/>
        <end position="30"/>
    </location>
    <ligand>
        <name>substrate</name>
    </ligand>
</feature>
<feature type="binding site" evidence="4">
    <location>
        <position position="25"/>
    </location>
    <ligand>
        <name>a divalent metal cation</name>
        <dbReference type="ChEBI" id="CHEBI:60240"/>
        <label>3</label>
    </ligand>
</feature>
<feature type="binding site" evidence="4">
    <location>
        <position position="30"/>
    </location>
    <ligand>
        <name>a divalent metal cation</name>
        <dbReference type="ChEBI" id="CHEBI:60240"/>
        <label>3</label>
    </ligand>
</feature>
<feature type="binding site" evidence="4">
    <location>
        <begin position="69"/>
        <end position="75"/>
    </location>
    <ligand>
        <name>substrate</name>
    </ligand>
</feature>
<feature type="binding site" evidence="4">
    <location>
        <position position="69"/>
    </location>
    <ligand>
        <name>a divalent metal cation</name>
        <dbReference type="ChEBI" id="CHEBI:60240"/>
        <label>1</label>
    </ligand>
</feature>
<feature type="binding site" evidence="3">
    <location>
        <begin position="84"/>
        <end position="87"/>
    </location>
    <ligand>
        <name>substrate</name>
    </ligand>
</feature>
<feature type="binding site" evidence="4">
    <location>
        <position position="84"/>
    </location>
    <ligand>
        <name>a divalent metal cation</name>
        <dbReference type="ChEBI" id="CHEBI:60240"/>
        <label>1</label>
    </ligand>
</feature>
<feature type="binding site" evidence="3">
    <location>
        <begin position="94"/>
        <end position="99"/>
    </location>
    <ligand>
        <name>substrate</name>
    </ligand>
</feature>
<feature type="binding site" evidence="4">
    <location>
        <position position="118"/>
    </location>
    <ligand>
        <name>substrate</name>
    </ligand>
</feature>
<feature type="binding site" evidence="4">
    <location>
        <position position="136"/>
    </location>
    <ligand>
        <name>substrate</name>
    </ligand>
</feature>
<feature type="binding site" evidence="4">
    <location>
        <position position="147"/>
    </location>
    <ligand>
        <name>a divalent metal cation</name>
        <dbReference type="ChEBI" id="CHEBI:60240"/>
        <label>1</label>
    </ligand>
</feature>
<feature type="binding site" evidence="4">
    <location>
        <position position="151"/>
    </location>
    <ligand>
        <name>a divalent metal cation</name>
        <dbReference type="ChEBI" id="CHEBI:60240"/>
        <label>1</label>
    </ligand>
</feature>
<feature type="binding site" evidence="4">
    <location>
        <position position="151"/>
    </location>
    <ligand>
        <name>a divalent metal cation</name>
        <dbReference type="ChEBI" id="CHEBI:60240"/>
        <label>3</label>
    </ligand>
</feature>
<feature type="binding site" evidence="4">
    <location>
        <position position="157"/>
    </location>
    <ligand>
        <name>a divalent metal cation</name>
        <dbReference type="ChEBI" id="CHEBI:60240"/>
        <label>2</label>
    </ligand>
</feature>
<feature type="binding site" evidence="4">
    <location>
        <position position="181"/>
    </location>
    <ligand>
        <name>a divalent metal cation</name>
        <dbReference type="ChEBI" id="CHEBI:60240"/>
        <label>2</label>
    </ligand>
</feature>
<feature type="binding site" evidence="4">
    <location>
        <position position="185"/>
    </location>
    <ligand>
        <name>a divalent metal cation</name>
        <dbReference type="ChEBI" id="CHEBI:60240"/>
        <label>2</label>
    </ligand>
</feature>
<feature type="site" description="Important for catalytic activity" evidence="2">
    <location>
        <position position="69"/>
    </location>
</feature>
<feature type="site" description="Important for catalytic activity" evidence="3">
    <location>
        <position position="72"/>
    </location>
</feature>
<feature type="glycosylation site" description="N-linked (GlcNAc...) asparagine" evidence="6">
    <location>
        <position position="118"/>
    </location>
</feature>
<feature type="glycosylation site" description="N-linked (GlcNAc...) asparagine" evidence="6">
    <location>
        <position position="137"/>
    </location>
</feature>
<feature type="glycosylation site" description="N-linked (GlcNAc...) asparagine" evidence="6">
    <location>
        <position position="198"/>
    </location>
</feature>
<feature type="glycosylation site" description="N-linked (GlcNAc...) asparagine" evidence="6">
    <location>
        <position position="211"/>
    </location>
</feature>
<feature type="glycosylation site" description="N-linked (GlcNAc...) asparagine" evidence="6">
    <location>
        <position position="229"/>
    </location>
</feature>
<feature type="disulfide bond" evidence="4">
    <location>
        <begin position="34"/>
        <end position="65"/>
    </location>
</feature>
<feature type="disulfide bond" evidence="4">
    <location>
        <begin position="93"/>
        <end position="246"/>
    </location>
</feature>
<feature type="disulfide bond" evidence="4">
    <location>
        <begin position="101"/>
        <end position="111"/>
    </location>
</feature>
<feature type="disulfide bond" evidence="4">
    <location>
        <begin position="226"/>
        <end position="233"/>
    </location>
</feature>
<feature type="mutagenesis site" description="Loss of activity." evidence="8">
    <location>
        <begin position="284"/>
        <end position="299"/>
    </location>
</feature>
<sequence>MSSSLRQWFARVLVLTQLINGALCWGKEGHYTVCKIAESYFEEETVAAVKKLLPKSADGDLASVCSWPDEIKHHWQWRWTSPLHYVDTPDYRCNYEYCRDCHDTHKNQDRCVTGAIFNYTMQLMSASENSDTIVHYNLTEALMFLSHFIGDIHQPLHVGFLGDEGGNTITVRWYRRKTNLHHVWDNMIIESALKTYYNKSLPLMIEALQANLTNDWSNDVPLWESCQLNQTACPNPYASESINLACKYAYRNATPGTTLGDDYFLSRLPIVEKRLAQGGIRLAATLNRIFSSKPKHAGS</sequence>